<protein>
    <recommendedName>
        <fullName evidence="4">Large ribosomal subunit protein bL21m</fullName>
    </recommendedName>
    <alternativeName>
        <fullName>39S ribosomal protein L21, mitochondrial</fullName>
        <shortName>L21mt</shortName>
        <shortName>MRP-L21</shortName>
    </alternativeName>
</protein>
<evidence type="ECO:0000250" key="1">
    <source>
        <dbReference type="UniProtKB" id="Q7Z2W9"/>
    </source>
</evidence>
<evidence type="ECO:0000255" key="2"/>
<evidence type="ECO:0000303" key="3">
    <source>
    </source>
</evidence>
<evidence type="ECO:0000305" key="4"/>
<gene>
    <name type="primary">Mrpl21</name>
    <name type="synonym">D9Wsu149</name>
</gene>
<proteinExistence type="evidence at protein level"/>
<sequence length="209" mass="23366">MAAAIAASALPGAFGRLVSVCSRSILASQGSGSASLWSASRRFNSQSASYPQGYVPKTSLSSPPWQEVVLPDPVEETRHHAEVVKRVNELIATGQYGRLFAVVHFASHQWKVTAEDLILIENELDIKCGERIRLEKVLLVGADNFTLLGKPLLRKELVRVEATVIEKTESWPKINMKFRKRKNFRKKKIIVNPQTILRINTIEIAPRLL</sequence>
<keyword id="KW-0025">Alternative splicing</keyword>
<keyword id="KW-0496">Mitochondrion</keyword>
<keyword id="KW-1185">Reference proteome</keyword>
<keyword id="KW-0687">Ribonucleoprotein</keyword>
<keyword id="KW-0689">Ribosomal protein</keyword>
<keyword id="KW-0809">Transit peptide</keyword>
<accession>Q9D1N9</accession>
<accession>Q9CSH9</accession>
<accession>Q9D214</accession>
<feature type="transit peptide" description="Mitochondrion" evidence="2">
    <location>
        <begin position="1"/>
        <end position="43"/>
    </location>
</feature>
<feature type="chain" id="PRO_0000252443" description="Large ribosomal subunit protein bL21m">
    <location>
        <begin position="44"/>
        <end position="209"/>
    </location>
</feature>
<feature type="splice variant" id="VSP_020975" description="In isoform 2." evidence="3">
    <original>IIVNPQTILRINTIEIAPRLL</original>
    <variation>NTDPSGYLCLSACQREQFSEVGPTLHLV</variation>
    <location>
        <begin position="189"/>
        <end position="209"/>
    </location>
</feature>
<organism>
    <name type="scientific">Mus musculus</name>
    <name type="common">Mouse</name>
    <dbReference type="NCBI Taxonomy" id="10090"/>
    <lineage>
        <taxon>Eukaryota</taxon>
        <taxon>Metazoa</taxon>
        <taxon>Chordata</taxon>
        <taxon>Craniata</taxon>
        <taxon>Vertebrata</taxon>
        <taxon>Euteleostomi</taxon>
        <taxon>Mammalia</taxon>
        <taxon>Eutheria</taxon>
        <taxon>Euarchontoglires</taxon>
        <taxon>Glires</taxon>
        <taxon>Rodentia</taxon>
        <taxon>Myomorpha</taxon>
        <taxon>Muroidea</taxon>
        <taxon>Muridae</taxon>
        <taxon>Murinae</taxon>
        <taxon>Mus</taxon>
        <taxon>Mus</taxon>
    </lineage>
</organism>
<reference key="1">
    <citation type="journal article" date="2005" name="Science">
        <title>The transcriptional landscape of the mammalian genome.</title>
        <authorList>
            <person name="Carninci P."/>
            <person name="Kasukawa T."/>
            <person name="Katayama S."/>
            <person name="Gough J."/>
            <person name="Frith M.C."/>
            <person name="Maeda N."/>
            <person name="Oyama R."/>
            <person name="Ravasi T."/>
            <person name="Lenhard B."/>
            <person name="Wells C."/>
            <person name="Kodzius R."/>
            <person name="Shimokawa K."/>
            <person name="Bajic V.B."/>
            <person name="Brenner S.E."/>
            <person name="Batalov S."/>
            <person name="Forrest A.R."/>
            <person name="Zavolan M."/>
            <person name="Davis M.J."/>
            <person name="Wilming L.G."/>
            <person name="Aidinis V."/>
            <person name="Allen J.E."/>
            <person name="Ambesi-Impiombato A."/>
            <person name="Apweiler R."/>
            <person name="Aturaliya R.N."/>
            <person name="Bailey T.L."/>
            <person name="Bansal M."/>
            <person name="Baxter L."/>
            <person name="Beisel K.W."/>
            <person name="Bersano T."/>
            <person name="Bono H."/>
            <person name="Chalk A.M."/>
            <person name="Chiu K.P."/>
            <person name="Choudhary V."/>
            <person name="Christoffels A."/>
            <person name="Clutterbuck D.R."/>
            <person name="Crowe M.L."/>
            <person name="Dalla E."/>
            <person name="Dalrymple B.P."/>
            <person name="de Bono B."/>
            <person name="Della Gatta G."/>
            <person name="di Bernardo D."/>
            <person name="Down T."/>
            <person name="Engstrom P."/>
            <person name="Fagiolini M."/>
            <person name="Faulkner G."/>
            <person name="Fletcher C.F."/>
            <person name="Fukushima T."/>
            <person name="Furuno M."/>
            <person name="Futaki S."/>
            <person name="Gariboldi M."/>
            <person name="Georgii-Hemming P."/>
            <person name="Gingeras T.R."/>
            <person name="Gojobori T."/>
            <person name="Green R.E."/>
            <person name="Gustincich S."/>
            <person name="Harbers M."/>
            <person name="Hayashi Y."/>
            <person name="Hensch T.K."/>
            <person name="Hirokawa N."/>
            <person name="Hill D."/>
            <person name="Huminiecki L."/>
            <person name="Iacono M."/>
            <person name="Ikeo K."/>
            <person name="Iwama A."/>
            <person name="Ishikawa T."/>
            <person name="Jakt M."/>
            <person name="Kanapin A."/>
            <person name="Katoh M."/>
            <person name="Kawasawa Y."/>
            <person name="Kelso J."/>
            <person name="Kitamura H."/>
            <person name="Kitano H."/>
            <person name="Kollias G."/>
            <person name="Krishnan S.P."/>
            <person name="Kruger A."/>
            <person name="Kummerfeld S.K."/>
            <person name="Kurochkin I.V."/>
            <person name="Lareau L.F."/>
            <person name="Lazarevic D."/>
            <person name="Lipovich L."/>
            <person name="Liu J."/>
            <person name="Liuni S."/>
            <person name="McWilliam S."/>
            <person name="Madan Babu M."/>
            <person name="Madera M."/>
            <person name="Marchionni L."/>
            <person name="Matsuda H."/>
            <person name="Matsuzawa S."/>
            <person name="Miki H."/>
            <person name="Mignone F."/>
            <person name="Miyake S."/>
            <person name="Morris K."/>
            <person name="Mottagui-Tabar S."/>
            <person name="Mulder N."/>
            <person name="Nakano N."/>
            <person name="Nakauchi H."/>
            <person name="Ng P."/>
            <person name="Nilsson R."/>
            <person name="Nishiguchi S."/>
            <person name="Nishikawa S."/>
            <person name="Nori F."/>
            <person name="Ohara O."/>
            <person name="Okazaki Y."/>
            <person name="Orlando V."/>
            <person name="Pang K.C."/>
            <person name="Pavan W.J."/>
            <person name="Pavesi G."/>
            <person name="Pesole G."/>
            <person name="Petrovsky N."/>
            <person name="Piazza S."/>
            <person name="Reed J."/>
            <person name="Reid J.F."/>
            <person name="Ring B.Z."/>
            <person name="Ringwald M."/>
            <person name="Rost B."/>
            <person name="Ruan Y."/>
            <person name="Salzberg S.L."/>
            <person name="Sandelin A."/>
            <person name="Schneider C."/>
            <person name="Schoenbach C."/>
            <person name="Sekiguchi K."/>
            <person name="Semple C.A."/>
            <person name="Seno S."/>
            <person name="Sessa L."/>
            <person name="Sheng Y."/>
            <person name="Shibata Y."/>
            <person name="Shimada H."/>
            <person name="Shimada K."/>
            <person name="Silva D."/>
            <person name="Sinclair B."/>
            <person name="Sperling S."/>
            <person name="Stupka E."/>
            <person name="Sugiura K."/>
            <person name="Sultana R."/>
            <person name="Takenaka Y."/>
            <person name="Taki K."/>
            <person name="Tammoja K."/>
            <person name="Tan S.L."/>
            <person name="Tang S."/>
            <person name="Taylor M.S."/>
            <person name="Tegner J."/>
            <person name="Teichmann S.A."/>
            <person name="Ueda H.R."/>
            <person name="van Nimwegen E."/>
            <person name="Verardo R."/>
            <person name="Wei C.L."/>
            <person name="Yagi K."/>
            <person name="Yamanishi H."/>
            <person name="Zabarovsky E."/>
            <person name="Zhu S."/>
            <person name="Zimmer A."/>
            <person name="Hide W."/>
            <person name="Bult C."/>
            <person name="Grimmond S.M."/>
            <person name="Teasdale R.D."/>
            <person name="Liu E.T."/>
            <person name="Brusic V."/>
            <person name="Quackenbush J."/>
            <person name="Wahlestedt C."/>
            <person name="Mattick J.S."/>
            <person name="Hume D.A."/>
            <person name="Kai C."/>
            <person name="Sasaki D."/>
            <person name="Tomaru Y."/>
            <person name="Fukuda S."/>
            <person name="Kanamori-Katayama M."/>
            <person name="Suzuki M."/>
            <person name="Aoki J."/>
            <person name="Arakawa T."/>
            <person name="Iida J."/>
            <person name="Imamura K."/>
            <person name="Itoh M."/>
            <person name="Kato T."/>
            <person name="Kawaji H."/>
            <person name="Kawagashira N."/>
            <person name="Kawashima T."/>
            <person name="Kojima M."/>
            <person name="Kondo S."/>
            <person name="Konno H."/>
            <person name="Nakano K."/>
            <person name="Ninomiya N."/>
            <person name="Nishio T."/>
            <person name="Okada M."/>
            <person name="Plessy C."/>
            <person name="Shibata K."/>
            <person name="Shiraki T."/>
            <person name="Suzuki S."/>
            <person name="Tagami M."/>
            <person name="Waki K."/>
            <person name="Watahiki A."/>
            <person name="Okamura-Oho Y."/>
            <person name="Suzuki H."/>
            <person name="Kawai J."/>
            <person name="Hayashizaki Y."/>
        </authorList>
    </citation>
    <scope>NUCLEOTIDE SEQUENCE [LARGE SCALE MRNA] (ISOFORMS 1 AND 2)</scope>
    <source>
        <strain>C57BL/6J</strain>
        <tissue>Embryo</tissue>
        <tissue>Spinal cord</tissue>
    </source>
</reference>
<reference key="2">
    <citation type="journal article" date="2004" name="Genome Res.">
        <title>The status, quality, and expansion of the NIH full-length cDNA project: the Mammalian Gene Collection (MGC).</title>
        <authorList>
            <consortium name="The MGC Project Team"/>
        </authorList>
    </citation>
    <scope>NUCLEOTIDE SEQUENCE [LARGE SCALE MRNA] (ISOFORM 1)</scope>
    <source>
        <strain>C57BL/6J</strain>
        <tissue>Thymus</tissue>
    </source>
</reference>
<reference key="3">
    <citation type="journal article" date="2010" name="Cell">
        <title>A tissue-specific atlas of mouse protein phosphorylation and expression.</title>
        <authorList>
            <person name="Huttlin E.L."/>
            <person name="Jedrychowski M.P."/>
            <person name="Elias J.E."/>
            <person name="Goswami T."/>
            <person name="Rad R."/>
            <person name="Beausoleil S.A."/>
            <person name="Villen J."/>
            <person name="Haas W."/>
            <person name="Sowa M.E."/>
            <person name="Gygi S.P."/>
        </authorList>
    </citation>
    <scope>IDENTIFICATION BY MASS SPECTROMETRY [LARGE SCALE ANALYSIS]</scope>
    <source>
        <tissue>Brain</tissue>
        <tissue>Brown adipose tissue</tissue>
        <tissue>Heart</tissue>
        <tissue>Kidney</tissue>
        <tissue>Liver</tissue>
        <tissue>Spleen</tissue>
        <tissue>Testis</tissue>
    </source>
</reference>
<comment type="subunit">
    <text evidence="1">Component of the mitochondrial ribosome large subunit (39S) which comprises a 16S rRNA and about 50 distinct proteins.</text>
</comment>
<comment type="subcellular location">
    <subcellularLocation>
        <location evidence="1">Mitochondrion</location>
    </subcellularLocation>
</comment>
<comment type="alternative products">
    <event type="alternative splicing"/>
    <isoform>
        <id>Q9D1N9-1</id>
        <name>1</name>
        <sequence type="displayed"/>
    </isoform>
    <isoform>
        <id>Q9D1N9-2</id>
        <name>2</name>
        <sequence type="described" ref="VSP_020975"/>
    </isoform>
</comment>
<comment type="similarity">
    <text evidence="4">Belongs to the bacterial ribosomal protein bL21 family.</text>
</comment>
<dbReference type="EMBL" id="AK003285">
    <property type="protein sequence ID" value="BAB22690.1"/>
    <property type="molecule type" value="mRNA"/>
</dbReference>
<dbReference type="EMBL" id="AK012784">
    <property type="protein sequence ID" value="BAB28467.1"/>
    <property type="molecule type" value="mRNA"/>
</dbReference>
<dbReference type="EMBL" id="AK020739">
    <property type="protein sequence ID" value="BAB32196.1"/>
    <property type="molecule type" value="mRNA"/>
</dbReference>
<dbReference type="EMBL" id="BC028768">
    <property type="protein sequence ID" value="AAH28768.1"/>
    <property type="molecule type" value="mRNA"/>
</dbReference>
<dbReference type="CCDS" id="CCDS29394.1">
    <molecule id="Q9D1N9-2"/>
</dbReference>
<dbReference type="CCDS" id="CCDS84406.1">
    <molecule id="Q9D1N9-1"/>
</dbReference>
<dbReference type="RefSeq" id="NP_001334349.1">
    <molecule id="Q9D1N9-1"/>
    <property type="nucleotide sequence ID" value="NM_001347420.2"/>
</dbReference>
<dbReference type="RefSeq" id="NP_758456.2">
    <molecule id="Q9D1N9-2"/>
    <property type="nucleotide sequence ID" value="NM_172252.3"/>
</dbReference>
<dbReference type="SMR" id="Q9D1N9"/>
<dbReference type="BioGRID" id="237278">
    <property type="interactions" value="2"/>
</dbReference>
<dbReference type="ComplexPortal" id="CPX-5302">
    <property type="entry name" value="39S mitochondrial large ribosomal subunit"/>
</dbReference>
<dbReference type="FunCoup" id="Q9D1N9">
    <property type="interactions" value="1626"/>
</dbReference>
<dbReference type="STRING" id="10090.ENSMUSP00000025745"/>
<dbReference type="PhosphoSitePlus" id="Q9D1N9"/>
<dbReference type="SwissPalm" id="Q9D1N9"/>
<dbReference type="PaxDb" id="10090-ENSMUSP00000025745"/>
<dbReference type="PeptideAtlas" id="Q9D1N9"/>
<dbReference type="ProteomicsDB" id="300520">
    <molecule id="Q9D1N9-1"/>
</dbReference>
<dbReference type="ProteomicsDB" id="300521">
    <molecule id="Q9D1N9-2"/>
</dbReference>
<dbReference type="Pumba" id="Q9D1N9"/>
<dbReference type="Antibodypedia" id="30611">
    <property type="antibodies" value="138 antibodies from 22 providers"/>
</dbReference>
<dbReference type="DNASU" id="353242"/>
<dbReference type="Ensembl" id="ENSMUST00000025743.7">
    <molecule id="Q9D1N9-1"/>
    <property type="protein sequence ID" value="ENSMUSP00000025743.7"/>
    <property type="gene ID" value="ENSMUSG00000024829.13"/>
</dbReference>
<dbReference type="Ensembl" id="ENSMUST00000025745.10">
    <molecule id="Q9D1N9-2"/>
    <property type="protein sequence ID" value="ENSMUSP00000025745.4"/>
    <property type="gene ID" value="ENSMUSG00000024829.13"/>
</dbReference>
<dbReference type="GeneID" id="353242"/>
<dbReference type="KEGG" id="mmu:353242"/>
<dbReference type="UCSC" id="uc008fwd.1">
    <molecule id="Q9D1N9-1"/>
    <property type="organism name" value="mouse"/>
</dbReference>
<dbReference type="UCSC" id="uc008fwe.1">
    <molecule id="Q9D1N9-2"/>
    <property type="organism name" value="mouse"/>
</dbReference>
<dbReference type="AGR" id="MGI:2660674"/>
<dbReference type="CTD" id="219927"/>
<dbReference type="MGI" id="MGI:2660674">
    <property type="gene designation" value="Mrpl21"/>
</dbReference>
<dbReference type="VEuPathDB" id="HostDB:ENSMUSG00000024829"/>
<dbReference type="eggNOG" id="KOG1686">
    <property type="taxonomic scope" value="Eukaryota"/>
</dbReference>
<dbReference type="GeneTree" id="ENSGT00390000005535"/>
<dbReference type="HOGENOM" id="CLU_061463_5_0_1"/>
<dbReference type="InParanoid" id="Q9D1N9"/>
<dbReference type="OMA" id="QWKVTDE"/>
<dbReference type="OrthoDB" id="74602at9989"/>
<dbReference type="TreeFam" id="TF324867"/>
<dbReference type="Reactome" id="R-MMU-5389840">
    <property type="pathway name" value="Mitochondrial translation elongation"/>
</dbReference>
<dbReference type="Reactome" id="R-MMU-5419276">
    <property type="pathway name" value="Mitochondrial translation termination"/>
</dbReference>
<dbReference type="BioGRID-ORCS" id="353242">
    <property type="hits" value="21 hits in 62 CRISPR screens"/>
</dbReference>
<dbReference type="ChiTaRS" id="Mrpl21">
    <property type="organism name" value="mouse"/>
</dbReference>
<dbReference type="PRO" id="PR:Q9D1N9"/>
<dbReference type="Proteomes" id="UP000000589">
    <property type="component" value="Chromosome 19"/>
</dbReference>
<dbReference type="RNAct" id="Q9D1N9">
    <property type="molecule type" value="protein"/>
</dbReference>
<dbReference type="Bgee" id="ENSMUSG00000024829">
    <property type="expression patterns" value="Expressed in ectoplacental cone and 157 other cell types or tissues"/>
</dbReference>
<dbReference type="ExpressionAtlas" id="Q9D1N9">
    <property type="expression patterns" value="baseline and differential"/>
</dbReference>
<dbReference type="GO" id="GO:0005743">
    <property type="term" value="C:mitochondrial inner membrane"/>
    <property type="evidence" value="ECO:0000303"/>
    <property type="project" value="ComplexPortal"/>
</dbReference>
<dbReference type="GO" id="GO:0005762">
    <property type="term" value="C:mitochondrial large ribosomal subunit"/>
    <property type="evidence" value="ECO:0000250"/>
    <property type="project" value="UniProtKB"/>
</dbReference>
<dbReference type="GO" id="GO:0005739">
    <property type="term" value="C:mitochondrion"/>
    <property type="evidence" value="ECO:0007005"/>
    <property type="project" value="MGI"/>
</dbReference>
<dbReference type="GO" id="GO:0003723">
    <property type="term" value="F:RNA binding"/>
    <property type="evidence" value="ECO:0007669"/>
    <property type="project" value="InterPro"/>
</dbReference>
<dbReference type="GO" id="GO:0003735">
    <property type="term" value="F:structural constituent of ribosome"/>
    <property type="evidence" value="ECO:0007669"/>
    <property type="project" value="InterPro"/>
</dbReference>
<dbReference type="GO" id="GO:0032543">
    <property type="term" value="P:mitochondrial translation"/>
    <property type="evidence" value="ECO:0000303"/>
    <property type="project" value="ComplexPortal"/>
</dbReference>
<dbReference type="InterPro" id="IPR028909">
    <property type="entry name" value="bL21-like"/>
</dbReference>
<dbReference type="InterPro" id="IPR036164">
    <property type="entry name" value="bL21-like_sf"/>
</dbReference>
<dbReference type="InterPro" id="IPR001787">
    <property type="entry name" value="Ribosomal_bL21"/>
</dbReference>
<dbReference type="NCBIfam" id="TIGR00061">
    <property type="entry name" value="L21"/>
    <property type="match status" value="1"/>
</dbReference>
<dbReference type="PANTHER" id="PTHR21349">
    <property type="entry name" value="50S RIBOSOMAL PROTEIN L21"/>
    <property type="match status" value="1"/>
</dbReference>
<dbReference type="PANTHER" id="PTHR21349:SF0">
    <property type="entry name" value="LARGE RIBOSOMAL SUBUNIT PROTEIN BL21M"/>
    <property type="match status" value="1"/>
</dbReference>
<dbReference type="Pfam" id="PF00829">
    <property type="entry name" value="Ribosomal_L21p"/>
    <property type="match status" value="1"/>
</dbReference>
<dbReference type="SUPFAM" id="SSF141091">
    <property type="entry name" value="L21p-like"/>
    <property type="match status" value="1"/>
</dbReference>
<name>RM21_MOUSE</name>